<comment type="function">
    <text evidence="1">One of the components of the core complex of photosystem II (PSII). PSII is a light-driven water:plastoquinone oxidoreductase that uses light energy to abstract electrons from H(2)O, generating O(2) and a proton gradient subsequently used for ATP formation. It consists of a core antenna complex that captures photons, and an electron transfer chain that converts photonic excitation into a charge separation. This subunit is found at the monomer-monomer interface and is required for correct PSII assembly and/or dimerization.</text>
</comment>
<comment type="subunit">
    <text evidence="1">PSII is composed of 1 copy each of membrane proteins PsbA, PsbB, PsbC, PsbD, PsbE, PsbF, PsbH, PsbI, PsbJ, PsbK, PsbL, PsbM, PsbT, PsbX, PsbY, PsbZ, Psb30/Ycf12, at least 3 peripheral proteins of the oxygen-evolving complex and a large number of cofactors. It forms dimeric complexes.</text>
</comment>
<comment type="subcellular location">
    <subcellularLocation>
        <location evidence="1">Plastid</location>
        <location evidence="1">Chloroplast thylakoid membrane</location>
        <topology evidence="1">Single-pass membrane protein</topology>
    </subcellularLocation>
</comment>
<comment type="RNA editing">
    <location>
        <position position="1" evidence="2"/>
    </location>
    <location>
        <position position="20" evidence="2"/>
    </location>
    <location>
        <position position="31" evidence="2"/>
    </location>
    <location>
        <position position="32" evidence="2"/>
    </location>
    <text>The initiator methionine is created by RNA editing.</text>
</comment>
<comment type="similarity">
    <text evidence="1">Belongs to the PsbL family.</text>
</comment>
<accession>Q85FK7</accession>
<feature type="chain" id="PRO_0000219672" description="Photosystem II reaction center protein L">
    <location>
        <begin position="1"/>
        <end position="38"/>
    </location>
</feature>
<feature type="transmembrane region" description="Helical" evidence="1">
    <location>
        <begin position="17"/>
        <end position="37"/>
    </location>
</feature>
<gene>
    <name evidence="1" type="primary">psbL</name>
</gene>
<name>PSBL_ADICA</name>
<dbReference type="EMBL" id="AY178864">
    <property type="protein sequence ID" value="AAP29406.2"/>
    <property type="molecule type" value="Genomic_DNA"/>
</dbReference>
<dbReference type="RefSeq" id="NP_848075.2">
    <property type="nucleotide sequence ID" value="NC_004766.1"/>
</dbReference>
<dbReference type="SMR" id="Q85FK7"/>
<dbReference type="GeneID" id="807414"/>
<dbReference type="GO" id="GO:0009535">
    <property type="term" value="C:chloroplast thylakoid membrane"/>
    <property type="evidence" value="ECO:0007669"/>
    <property type="project" value="UniProtKB-SubCell"/>
</dbReference>
<dbReference type="GO" id="GO:0009539">
    <property type="term" value="C:photosystem II reaction center"/>
    <property type="evidence" value="ECO:0007669"/>
    <property type="project" value="InterPro"/>
</dbReference>
<dbReference type="GO" id="GO:0015979">
    <property type="term" value="P:photosynthesis"/>
    <property type="evidence" value="ECO:0007669"/>
    <property type="project" value="UniProtKB-UniRule"/>
</dbReference>
<dbReference type="HAMAP" id="MF_01317">
    <property type="entry name" value="PSII_PsbL"/>
    <property type="match status" value="1"/>
</dbReference>
<dbReference type="InterPro" id="IPR003372">
    <property type="entry name" value="PSII_PsbL"/>
</dbReference>
<dbReference type="InterPro" id="IPR037266">
    <property type="entry name" value="PSII_PsbL_sf"/>
</dbReference>
<dbReference type="NCBIfam" id="NF001972">
    <property type="entry name" value="PRK00753.1"/>
    <property type="match status" value="1"/>
</dbReference>
<dbReference type="Pfam" id="PF02419">
    <property type="entry name" value="PsbL"/>
    <property type="match status" value="1"/>
</dbReference>
<dbReference type="SUPFAM" id="SSF161017">
    <property type="entry name" value="Photosystem II reaction center protein L, PsbL"/>
    <property type="match status" value="1"/>
</dbReference>
<reference key="1">
    <citation type="journal article" date="2003" name="DNA Res.">
        <title>Complete nucleotide sequence of the chloroplast genome from a leptosporangiate fern, Adiantum capillus-veneris L.</title>
        <authorList>
            <person name="Wolf P.G."/>
            <person name="Rowe C.A."/>
            <person name="Sinclair R.B."/>
            <person name="Hasebe M."/>
        </authorList>
    </citation>
    <scope>NUCLEOTIDE SEQUENCE [LARGE SCALE GENOMIC DNA]</scope>
</reference>
<reference key="2">
    <citation type="journal article" date="2004" name="Gene">
        <title>High levels of RNA editing in a vascular plant chloroplast genome: analysis of transcripts from the fern Adiantum capillus-veneris.</title>
        <authorList>
            <person name="Wolf P.G."/>
            <person name="Rowe C.A."/>
            <person name="Hasebe M."/>
        </authorList>
    </citation>
    <scope>NUCLEOTIDE SEQUENCE [GENOMIC DNA]</scope>
    <scope>RNA EDITING</scope>
    <source>
        <tissue>Frond</tissue>
    </source>
</reference>
<evidence type="ECO:0000255" key="1">
    <source>
        <dbReference type="HAMAP-Rule" id="MF_01317"/>
    </source>
</evidence>
<evidence type="ECO:0000269" key="2">
    <source>
    </source>
</evidence>
<proteinExistence type="evidence at transcript level"/>
<organism>
    <name type="scientific">Adiantum capillus-veneris</name>
    <name type="common">Maidenhair fern</name>
    <dbReference type="NCBI Taxonomy" id="13818"/>
    <lineage>
        <taxon>Eukaryota</taxon>
        <taxon>Viridiplantae</taxon>
        <taxon>Streptophyta</taxon>
        <taxon>Embryophyta</taxon>
        <taxon>Tracheophyta</taxon>
        <taxon>Polypodiopsida</taxon>
        <taxon>Polypodiidae</taxon>
        <taxon>Polypodiales</taxon>
        <taxon>Pteridineae</taxon>
        <taxon>Pteridaceae</taxon>
        <taxon>Vittarioideae</taxon>
        <taxon>Adiantum</taxon>
    </lineage>
</organism>
<sequence length="38" mass="4463">MTQPNPNKQSVEPNRTSLYWGLLLIFVLAVLFSNYFFN</sequence>
<geneLocation type="chloroplast"/>
<keyword id="KW-0150">Chloroplast</keyword>
<keyword id="KW-0472">Membrane</keyword>
<keyword id="KW-0602">Photosynthesis</keyword>
<keyword id="KW-0604">Photosystem II</keyword>
<keyword id="KW-0934">Plastid</keyword>
<keyword id="KW-0674">Reaction center</keyword>
<keyword id="KW-0691">RNA editing</keyword>
<keyword id="KW-0793">Thylakoid</keyword>
<keyword id="KW-0812">Transmembrane</keyword>
<keyword id="KW-1133">Transmembrane helix</keyword>
<protein>
    <recommendedName>
        <fullName evidence="1">Photosystem II reaction center protein L</fullName>
        <shortName evidence="1">PSII-L</shortName>
    </recommendedName>
</protein>